<proteinExistence type="inferred from homology"/>
<evidence type="ECO:0000255" key="1">
    <source>
        <dbReference type="HAMAP-Rule" id="MF_00634"/>
    </source>
</evidence>
<comment type="similarity">
    <text evidence="1">Belongs to the UPF0235 family.</text>
</comment>
<sequence length="101" mass="11532">MIEKIVKESEKGILIDIEVTTNAKKNEIGKINEWRKRIEIRIKEQPIEGKANKAIMKFLKGIFKSEILINSGTTSAQKTVLIPDKTKDDIVKILKKEIKSI</sequence>
<name>Y538_METM5</name>
<dbReference type="EMBL" id="CP000609">
    <property type="protein sequence ID" value="ABO34852.1"/>
    <property type="molecule type" value="Genomic_DNA"/>
</dbReference>
<dbReference type="RefSeq" id="WP_011868307.1">
    <property type="nucleotide sequence ID" value="NC_009135.1"/>
</dbReference>
<dbReference type="SMR" id="A4FXC3"/>
<dbReference type="STRING" id="402880.MmarC5_0538"/>
<dbReference type="GeneID" id="4928459"/>
<dbReference type="KEGG" id="mmq:MmarC5_0538"/>
<dbReference type="eggNOG" id="arCOG04058">
    <property type="taxonomic scope" value="Archaea"/>
</dbReference>
<dbReference type="HOGENOM" id="CLU_130694_6_1_2"/>
<dbReference type="OrthoDB" id="53248at2157"/>
<dbReference type="Proteomes" id="UP000000253">
    <property type="component" value="Chromosome"/>
</dbReference>
<dbReference type="GO" id="GO:0005737">
    <property type="term" value="C:cytoplasm"/>
    <property type="evidence" value="ECO:0007669"/>
    <property type="project" value="TreeGrafter"/>
</dbReference>
<dbReference type="Gene3D" id="3.30.1200.10">
    <property type="entry name" value="YggU-like"/>
    <property type="match status" value="1"/>
</dbReference>
<dbReference type="HAMAP" id="MF_00634">
    <property type="entry name" value="UPF0235"/>
    <property type="match status" value="1"/>
</dbReference>
<dbReference type="InterPro" id="IPR003746">
    <property type="entry name" value="DUF167"/>
</dbReference>
<dbReference type="InterPro" id="IPR036591">
    <property type="entry name" value="YggU-like_sf"/>
</dbReference>
<dbReference type="NCBIfam" id="TIGR00251">
    <property type="entry name" value="DUF167 family protein"/>
    <property type="match status" value="1"/>
</dbReference>
<dbReference type="PANTHER" id="PTHR13420">
    <property type="entry name" value="UPF0235 PROTEIN C15ORF40"/>
    <property type="match status" value="1"/>
</dbReference>
<dbReference type="PANTHER" id="PTHR13420:SF7">
    <property type="entry name" value="UPF0235 PROTEIN C15ORF40"/>
    <property type="match status" value="1"/>
</dbReference>
<dbReference type="Pfam" id="PF02594">
    <property type="entry name" value="DUF167"/>
    <property type="match status" value="1"/>
</dbReference>
<dbReference type="SMART" id="SM01152">
    <property type="entry name" value="DUF167"/>
    <property type="match status" value="1"/>
</dbReference>
<dbReference type="SUPFAM" id="SSF69786">
    <property type="entry name" value="YggU-like"/>
    <property type="match status" value="1"/>
</dbReference>
<accession>A4FXC3</accession>
<organism>
    <name type="scientific">Methanococcus maripaludis (strain C5 / ATCC BAA-1333)</name>
    <dbReference type="NCBI Taxonomy" id="402880"/>
    <lineage>
        <taxon>Archaea</taxon>
        <taxon>Methanobacteriati</taxon>
        <taxon>Methanobacteriota</taxon>
        <taxon>Methanomada group</taxon>
        <taxon>Methanococci</taxon>
        <taxon>Methanococcales</taxon>
        <taxon>Methanococcaceae</taxon>
        <taxon>Methanococcus</taxon>
    </lineage>
</organism>
<feature type="chain" id="PRO_1000056770" description="UPF0235 protein MmarC5_0538">
    <location>
        <begin position="1"/>
        <end position="101"/>
    </location>
</feature>
<reference key="1">
    <citation type="submission" date="2007-03" db="EMBL/GenBank/DDBJ databases">
        <title>Complete sequence of chromosome of Methanococcus maripaludis C5.</title>
        <authorList>
            <consortium name="US DOE Joint Genome Institute"/>
            <person name="Copeland A."/>
            <person name="Lucas S."/>
            <person name="Lapidus A."/>
            <person name="Barry K."/>
            <person name="Glavina del Rio T."/>
            <person name="Dalin E."/>
            <person name="Tice H."/>
            <person name="Pitluck S."/>
            <person name="Chertkov O."/>
            <person name="Brettin T."/>
            <person name="Bruce D."/>
            <person name="Han C."/>
            <person name="Detter J.C."/>
            <person name="Schmutz J."/>
            <person name="Larimer F."/>
            <person name="Land M."/>
            <person name="Hauser L."/>
            <person name="Kyrpides N."/>
            <person name="Mikhailova N."/>
            <person name="Sieprawska-Lupa M."/>
            <person name="Whitman W.B."/>
            <person name="Richardson P."/>
        </authorList>
    </citation>
    <scope>NUCLEOTIDE SEQUENCE [LARGE SCALE GENOMIC DNA]</scope>
    <source>
        <strain>C5 / ATCC BAA-1333</strain>
    </source>
</reference>
<gene>
    <name type="ordered locus">MmarC5_0538</name>
</gene>
<protein>
    <recommendedName>
        <fullName evidence="1">UPF0235 protein MmarC5_0538</fullName>
    </recommendedName>
</protein>